<feature type="chain" id="PRO_1000024059" description="Dihydroorotase">
    <location>
        <begin position="1"/>
        <end position="348"/>
    </location>
</feature>
<feature type="active site" evidence="1">
    <location>
        <position position="251"/>
    </location>
</feature>
<feature type="binding site" evidence="1">
    <location>
        <position position="17"/>
    </location>
    <ligand>
        <name>Zn(2+)</name>
        <dbReference type="ChEBI" id="CHEBI:29105"/>
        <label>1</label>
    </ligand>
</feature>
<feature type="binding site" evidence="1">
    <location>
        <begin position="19"/>
        <end position="21"/>
    </location>
    <ligand>
        <name>substrate</name>
    </ligand>
</feature>
<feature type="binding site" evidence="1">
    <location>
        <position position="19"/>
    </location>
    <ligand>
        <name>Zn(2+)</name>
        <dbReference type="ChEBI" id="CHEBI:29105"/>
        <label>1</label>
    </ligand>
</feature>
<feature type="binding site" evidence="1">
    <location>
        <position position="45"/>
    </location>
    <ligand>
        <name>substrate</name>
    </ligand>
</feature>
<feature type="binding site" description="via carbamate group" evidence="1">
    <location>
        <position position="103"/>
    </location>
    <ligand>
        <name>Zn(2+)</name>
        <dbReference type="ChEBI" id="CHEBI:29105"/>
        <label>1</label>
    </ligand>
</feature>
<feature type="binding site" description="via carbamate group" evidence="1">
    <location>
        <position position="103"/>
    </location>
    <ligand>
        <name>Zn(2+)</name>
        <dbReference type="ChEBI" id="CHEBI:29105"/>
        <label>2</label>
    </ligand>
</feature>
<feature type="binding site" evidence="1">
    <location>
        <position position="140"/>
    </location>
    <ligand>
        <name>substrate</name>
    </ligand>
</feature>
<feature type="binding site" evidence="1">
    <location>
        <position position="140"/>
    </location>
    <ligand>
        <name>Zn(2+)</name>
        <dbReference type="ChEBI" id="CHEBI:29105"/>
        <label>2</label>
    </ligand>
</feature>
<feature type="binding site" evidence="1">
    <location>
        <position position="178"/>
    </location>
    <ligand>
        <name>Zn(2+)</name>
        <dbReference type="ChEBI" id="CHEBI:29105"/>
        <label>2</label>
    </ligand>
</feature>
<feature type="binding site" evidence="1">
    <location>
        <position position="223"/>
    </location>
    <ligand>
        <name>substrate</name>
    </ligand>
</feature>
<feature type="binding site" evidence="1">
    <location>
        <position position="251"/>
    </location>
    <ligand>
        <name>Zn(2+)</name>
        <dbReference type="ChEBI" id="CHEBI:29105"/>
        <label>1</label>
    </ligand>
</feature>
<feature type="binding site" evidence="1">
    <location>
        <position position="255"/>
    </location>
    <ligand>
        <name>substrate</name>
    </ligand>
</feature>
<feature type="binding site" evidence="1">
    <location>
        <position position="267"/>
    </location>
    <ligand>
        <name>substrate</name>
    </ligand>
</feature>
<feature type="modified residue" description="N6-carboxylysine" evidence="1">
    <location>
        <position position="103"/>
    </location>
</feature>
<proteinExistence type="inferred from homology"/>
<dbReference type="EC" id="3.5.2.3" evidence="1"/>
<dbReference type="EMBL" id="CP000036">
    <property type="protein sequence ID" value="ABB66591.1"/>
    <property type="molecule type" value="Genomic_DNA"/>
</dbReference>
<dbReference type="RefSeq" id="WP_000126521.1">
    <property type="nucleotide sequence ID" value="NC_007613.1"/>
</dbReference>
<dbReference type="SMR" id="Q31ZB7"/>
<dbReference type="KEGG" id="sbo:SBO_2002"/>
<dbReference type="HOGENOM" id="CLU_041558_1_0_6"/>
<dbReference type="UniPathway" id="UPA00070">
    <property type="reaction ID" value="UER00117"/>
</dbReference>
<dbReference type="Proteomes" id="UP000007067">
    <property type="component" value="Chromosome"/>
</dbReference>
<dbReference type="GO" id="GO:0005829">
    <property type="term" value="C:cytosol"/>
    <property type="evidence" value="ECO:0007669"/>
    <property type="project" value="TreeGrafter"/>
</dbReference>
<dbReference type="GO" id="GO:0004151">
    <property type="term" value="F:dihydroorotase activity"/>
    <property type="evidence" value="ECO:0007669"/>
    <property type="project" value="UniProtKB-UniRule"/>
</dbReference>
<dbReference type="GO" id="GO:0008270">
    <property type="term" value="F:zinc ion binding"/>
    <property type="evidence" value="ECO:0007669"/>
    <property type="project" value="UniProtKB-UniRule"/>
</dbReference>
<dbReference type="GO" id="GO:0006207">
    <property type="term" value="P:'de novo' pyrimidine nucleobase biosynthetic process"/>
    <property type="evidence" value="ECO:0007669"/>
    <property type="project" value="TreeGrafter"/>
</dbReference>
<dbReference type="GO" id="GO:0044205">
    <property type="term" value="P:'de novo' UMP biosynthetic process"/>
    <property type="evidence" value="ECO:0007669"/>
    <property type="project" value="UniProtKB-UniRule"/>
</dbReference>
<dbReference type="CDD" id="cd01294">
    <property type="entry name" value="DHOase"/>
    <property type="match status" value="1"/>
</dbReference>
<dbReference type="FunFam" id="3.20.20.140:FF:000006">
    <property type="entry name" value="Dihydroorotase"/>
    <property type="match status" value="1"/>
</dbReference>
<dbReference type="Gene3D" id="3.20.20.140">
    <property type="entry name" value="Metal-dependent hydrolases"/>
    <property type="match status" value="1"/>
</dbReference>
<dbReference type="HAMAP" id="MF_00219">
    <property type="entry name" value="PyrC_classII"/>
    <property type="match status" value="1"/>
</dbReference>
<dbReference type="InterPro" id="IPR006680">
    <property type="entry name" value="Amidohydro-rel"/>
</dbReference>
<dbReference type="InterPro" id="IPR004721">
    <property type="entry name" value="DHOdimr"/>
</dbReference>
<dbReference type="InterPro" id="IPR002195">
    <property type="entry name" value="Dihydroorotase_CS"/>
</dbReference>
<dbReference type="InterPro" id="IPR032466">
    <property type="entry name" value="Metal_Hydrolase"/>
</dbReference>
<dbReference type="NCBIfam" id="TIGR00856">
    <property type="entry name" value="pyrC_dimer"/>
    <property type="match status" value="1"/>
</dbReference>
<dbReference type="PANTHER" id="PTHR43137">
    <property type="entry name" value="DIHYDROOROTASE"/>
    <property type="match status" value="1"/>
</dbReference>
<dbReference type="PANTHER" id="PTHR43137:SF1">
    <property type="entry name" value="DIHYDROOROTASE"/>
    <property type="match status" value="1"/>
</dbReference>
<dbReference type="Pfam" id="PF01979">
    <property type="entry name" value="Amidohydro_1"/>
    <property type="match status" value="1"/>
</dbReference>
<dbReference type="PIRSF" id="PIRSF001237">
    <property type="entry name" value="DHOdimr"/>
    <property type="match status" value="1"/>
</dbReference>
<dbReference type="SUPFAM" id="SSF51556">
    <property type="entry name" value="Metallo-dependent hydrolases"/>
    <property type="match status" value="1"/>
</dbReference>
<dbReference type="PROSITE" id="PS00482">
    <property type="entry name" value="DIHYDROOROTASE_1"/>
    <property type="match status" value="1"/>
</dbReference>
<dbReference type="PROSITE" id="PS00483">
    <property type="entry name" value="DIHYDROOROTASE_2"/>
    <property type="match status" value="1"/>
</dbReference>
<reference key="1">
    <citation type="journal article" date="2005" name="Nucleic Acids Res.">
        <title>Genome dynamics and diversity of Shigella species, the etiologic agents of bacillary dysentery.</title>
        <authorList>
            <person name="Yang F."/>
            <person name="Yang J."/>
            <person name="Zhang X."/>
            <person name="Chen L."/>
            <person name="Jiang Y."/>
            <person name="Yan Y."/>
            <person name="Tang X."/>
            <person name="Wang J."/>
            <person name="Xiong Z."/>
            <person name="Dong J."/>
            <person name="Xue Y."/>
            <person name="Zhu Y."/>
            <person name="Xu X."/>
            <person name="Sun L."/>
            <person name="Chen S."/>
            <person name="Nie H."/>
            <person name="Peng J."/>
            <person name="Xu J."/>
            <person name="Wang Y."/>
            <person name="Yuan Z."/>
            <person name="Wen Y."/>
            <person name="Yao Z."/>
            <person name="Shen Y."/>
            <person name="Qiang B."/>
            <person name="Hou Y."/>
            <person name="Yu J."/>
            <person name="Jin Q."/>
        </authorList>
    </citation>
    <scope>NUCLEOTIDE SEQUENCE [LARGE SCALE GENOMIC DNA]</scope>
    <source>
        <strain>Sb227</strain>
    </source>
</reference>
<keyword id="KW-0378">Hydrolase</keyword>
<keyword id="KW-0479">Metal-binding</keyword>
<keyword id="KW-0665">Pyrimidine biosynthesis</keyword>
<keyword id="KW-0862">Zinc</keyword>
<accession>Q31ZB7</accession>
<comment type="function">
    <text evidence="1">Catalyzes the reversible cyclization of carbamoyl aspartate to dihydroorotate.</text>
</comment>
<comment type="catalytic activity">
    <reaction evidence="1">
        <text>(S)-dihydroorotate + H2O = N-carbamoyl-L-aspartate + H(+)</text>
        <dbReference type="Rhea" id="RHEA:24296"/>
        <dbReference type="ChEBI" id="CHEBI:15377"/>
        <dbReference type="ChEBI" id="CHEBI:15378"/>
        <dbReference type="ChEBI" id="CHEBI:30864"/>
        <dbReference type="ChEBI" id="CHEBI:32814"/>
        <dbReference type="EC" id="3.5.2.3"/>
    </reaction>
</comment>
<comment type="cofactor">
    <cofactor evidence="1">
        <name>Zn(2+)</name>
        <dbReference type="ChEBI" id="CHEBI:29105"/>
    </cofactor>
    <text evidence="1">Binds 2 Zn(2+) ions per subunit.</text>
</comment>
<comment type="pathway">
    <text evidence="1">Pyrimidine metabolism; UMP biosynthesis via de novo pathway; (S)-dihydroorotate from bicarbonate: step 3/3.</text>
</comment>
<comment type="subunit">
    <text evidence="1">Homodimer.</text>
</comment>
<comment type="similarity">
    <text evidence="1">Belongs to the metallo-dependent hydrolases superfamily. DHOase family. Class II DHOase subfamily.</text>
</comment>
<gene>
    <name evidence="1" type="primary">pyrC</name>
    <name type="ordered locus">SBO_2002</name>
</gene>
<sequence length="348" mass="38839">MTAPSQVLKIRRPDDWHLHLRDGDMLKTVMPYTSEIYGRAIVMPNLAPPVTTVEAAVAYRQRILDAVPAGHNFTPLMTCYLTDSLDPNELERGFNEGVFTAAKLYPANATTNSSHGVTSIDAIMPVLERMEKIGMPLLVHGEVTHADIDIFDREAHFIESVMEPLRQRLTALKVVFEHITTKDAADYVRDGNERLAATITPQHLMFNRNHMLVGGVRPHLYCLPILKRNIHQQALRELVASGFNRVFLGTDSAPHARHRKESSCGCAGCFNAPTALGSYATVFEEMNALQHFEAFCSVNGPQFYGLPVNDTFIELVREEQQVAESIALTDDTLVPFLAGETVRWSVKQ</sequence>
<evidence type="ECO:0000255" key="1">
    <source>
        <dbReference type="HAMAP-Rule" id="MF_00219"/>
    </source>
</evidence>
<organism>
    <name type="scientific">Shigella boydii serotype 4 (strain Sb227)</name>
    <dbReference type="NCBI Taxonomy" id="300268"/>
    <lineage>
        <taxon>Bacteria</taxon>
        <taxon>Pseudomonadati</taxon>
        <taxon>Pseudomonadota</taxon>
        <taxon>Gammaproteobacteria</taxon>
        <taxon>Enterobacterales</taxon>
        <taxon>Enterobacteriaceae</taxon>
        <taxon>Shigella</taxon>
    </lineage>
</organism>
<name>PYRC_SHIBS</name>
<protein>
    <recommendedName>
        <fullName evidence="1">Dihydroorotase</fullName>
        <shortName evidence="1">DHOase</shortName>
        <ecNumber evidence="1">3.5.2.3</ecNumber>
    </recommendedName>
</protein>